<gene>
    <name type="primary">mepA</name>
    <name type="ordered locus">HI_0197</name>
</gene>
<organism>
    <name type="scientific">Haemophilus influenzae (strain ATCC 51907 / DSM 11121 / KW20 / Rd)</name>
    <dbReference type="NCBI Taxonomy" id="71421"/>
    <lineage>
        <taxon>Bacteria</taxon>
        <taxon>Pseudomonadati</taxon>
        <taxon>Pseudomonadota</taxon>
        <taxon>Gammaproteobacteria</taxon>
        <taxon>Pasteurellales</taxon>
        <taxon>Pasteurellaceae</taxon>
        <taxon>Haemophilus</taxon>
    </lineage>
</organism>
<dbReference type="EC" id="3.4.24.-"/>
<dbReference type="EMBL" id="L42023">
    <property type="protein sequence ID" value="AAC21866.1"/>
    <property type="molecule type" value="Genomic_DNA"/>
</dbReference>
<dbReference type="PIR" id="H64053">
    <property type="entry name" value="H64053"/>
</dbReference>
<dbReference type="RefSeq" id="NP_438366.1">
    <property type="nucleotide sequence ID" value="NC_000907.1"/>
</dbReference>
<dbReference type="SMR" id="P44566"/>
<dbReference type="STRING" id="71421.HI_0197"/>
<dbReference type="MEROPS" id="M74.001"/>
<dbReference type="EnsemblBacteria" id="AAC21866">
    <property type="protein sequence ID" value="AAC21866"/>
    <property type="gene ID" value="HI_0197"/>
</dbReference>
<dbReference type="KEGG" id="hin:HI_0197"/>
<dbReference type="PATRIC" id="fig|71421.8.peg.202"/>
<dbReference type="eggNOG" id="COG3770">
    <property type="taxonomic scope" value="Bacteria"/>
</dbReference>
<dbReference type="HOGENOM" id="CLU_052496_0_0_6"/>
<dbReference type="OrthoDB" id="1467367at2"/>
<dbReference type="PhylomeDB" id="P44566"/>
<dbReference type="BioCyc" id="HINF71421:G1GJ1-208-MONOMER"/>
<dbReference type="Proteomes" id="UP000000579">
    <property type="component" value="Chromosome"/>
</dbReference>
<dbReference type="GO" id="GO:0030288">
    <property type="term" value="C:outer membrane-bounded periplasmic space"/>
    <property type="evidence" value="ECO:0007669"/>
    <property type="project" value="InterPro"/>
</dbReference>
<dbReference type="GO" id="GO:0046872">
    <property type="term" value="F:metal ion binding"/>
    <property type="evidence" value="ECO:0007669"/>
    <property type="project" value="UniProtKB-KW"/>
</dbReference>
<dbReference type="GO" id="GO:0008237">
    <property type="term" value="F:metallopeptidase activity"/>
    <property type="evidence" value="ECO:0007669"/>
    <property type="project" value="UniProtKB-KW"/>
</dbReference>
<dbReference type="GO" id="GO:0004252">
    <property type="term" value="F:serine-type endopeptidase activity"/>
    <property type="evidence" value="ECO:0007669"/>
    <property type="project" value="InterPro"/>
</dbReference>
<dbReference type="GO" id="GO:0006508">
    <property type="term" value="P:proteolysis"/>
    <property type="evidence" value="ECO:0007669"/>
    <property type="project" value="UniProtKB-KW"/>
</dbReference>
<dbReference type="Gene3D" id="3.30.1380.10">
    <property type="match status" value="1"/>
</dbReference>
<dbReference type="InterPro" id="IPR009045">
    <property type="entry name" value="Hedgehog_sig/DD-Pept_Zn-bd_sf"/>
</dbReference>
<dbReference type="InterPro" id="IPR005073">
    <property type="entry name" value="Peptidase_M74"/>
</dbReference>
<dbReference type="NCBIfam" id="NF006947">
    <property type="entry name" value="PRK09429.1"/>
    <property type="match status" value="1"/>
</dbReference>
<dbReference type="Pfam" id="PF03411">
    <property type="entry name" value="Peptidase_M74"/>
    <property type="match status" value="1"/>
</dbReference>
<dbReference type="PIRSF" id="PIRSF018455">
    <property type="entry name" value="MepA"/>
    <property type="match status" value="1"/>
</dbReference>
<dbReference type="SUPFAM" id="SSF55166">
    <property type="entry name" value="Hedgehog/DD-peptidase"/>
    <property type="match status" value="1"/>
</dbReference>
<proteinExistence type="inferred from homology"/>
<keyword id="KW-0378">Hydrolase</keyword>
<keyword id="KW-0479">Metal-binding</keyword>
<keyword id="KW-0482">Metalloprotease</keyword>
<keyword id="KW-0574">Periplasm</keyword>
<keyword id="KW-0645">Protease</keyword>
<keyword id="KW-1185">Reference proteome</keyword>
<keyword id="KW-0732">Signal</keyword>
<keyword id="KW-0862">Zinc</keyword>
<evidence type="ECO:0000250" key="1"/>
<evidence type="ECO:0000255" key="2"/>
<evidence type="ECO:0000255" key="3">
    <source>
        <dbReference type="HAMAP-Rule" id="MF_01623"/>
    </source>
</evidence>
<evidence type="ECO:0000305" key="4"/>
<sequence length="286" mass="31652">MNKILLKTTIIFTALFSLNVVASPLDWQKVKRPIPSEDGKASPIGSYTNGCIIGAQALPPKGEGYQVIRMNRNRYYGHPNMIQYLERLGQRAKAAGLPTMLVGDIAMPGGGRFLTGHASHQMGLDADIWLRMGEMSDADALNSDGKGLLVVDRKAQRVDERVWNSNHATLIKLAAQDPNVTRIFVNPAIKVKLCQTAGNDRGWLHKIRPWHGHNSHFHVRLTCPADASYCENQAPVPAGDGCGDELYSWFEPPKPGTSVSKPKVTPPEPFLCQQILNSPNRREWLE</sequence>
<accession>P44566</accession>
<protein>
    <recommendedName>
        <fullName>Penicillin-insensitive murein endopeptidase</fullName>
        <ecNumber>3.4.24.-</ecNumber>
    </recommendedName>
</protein>
<feature type="signal peptide" evidence="2">
    <location>
        <begin position="1"/>
        <end position="22"/>
    </location>
</feature>
<feature type="chain" id="PRO_0000028521" description="Penicillin-insensitive murein endopeptidase">
    <location>
        <begin position="23"/>
        <end position="286"/>
    </location>
</feature>
<feature type="binding site" evidence="1">
    <location>
        <position position="117"/>
    </location>
    <ligand>
        <name>Zn(2+)</name>
        <dbReference type="ChEBI" id="CHEBI:29105"/>
        <label>1</label>
    </ligand>
</feature>
<feature type="binding site" evidence="1">
    <location>
        <position position="120"/>
    </location>
    <ligand>
        <name>Zn(2+)</name>
        <dbReference type="ChEBI" id="CHEBI:29105"/>
        <label>1</label>
    </ligand>
</feature>
<feature type="binding site" evidence="1">
    <location>
        <position position="127"/>
    </location>
    <ligand>
        <name>Zn(2+)</name>
        <dbReference type="ChEBI" id="CHEBI:29105"/>
        <label>1</label>
    </ligand>
</feature>
<feature type="binding site" evidence="1">
    <location>
        <position position="152"/>
    </location>
    <ligand>
        <name>Zn(2+)</name>
        <dbReference type="ChEBI" id="CHEBI:29105"/>
        <label>2</label>
    </ligand>
</feature>
<feature type="binding site" evidence="1">
    <location>
        <position position="218"/>
    </location>
    <ligand>
        <name>Zn(2+)</name>
        <dbReference type="ChEBI" id="CHEBI:29105"/>
        <label>1</label>
    </ligand>
</feature>
<reference key="1">
    <citation type="journal article" date="1995" name="Science">
        <title>Whole-genome random sequencing and assembly of Haemophilus influenzae Rd.</title>
        <authorList>
            <person name="Fleischmann R.D."/>
            <person name="Adams M.D."/>
            <person name="White O."/>
            <person name="Clayton R.A."/>
            <person name="Kirkness E.F."/>
            <person name="Kerlavage A.R."/>
            <person name="Bult C.J."/>
            <person name="Tomb J.-F."/>
            <person name="Dougherty B.A."/>
            <person name="Merrick J.M."/>
            <person name="McKenney K."/>
            <person name="Sutton G.G."/>
            <person name="FitzHugh W."/>
            <person name="Fields C.A."/>
            <person name="Gocayne J.D."/>
            <person name="Scott J.D."/>
            <person name="Shirley R."/>
            <person name="Liu L.-I."/>
            <person name="Glodek A."/>
            <person name="Kelley J.M."/>
            <person name="Weidman J.F."/>
            <person name="Phillips C.A."/>
            <person name="Spriggs T."/>
            <person name="Hedblom E."/>
            <person name="Cotton M.D."/>
            <person name="Utterback T.R."/>
            <person name="Hanna M.C."/>
            <person name="Nguyen D.T."/>
            <person name="Saudek D.M."/>
            <person name="Brandon R.C."/>
            <person name="Fine L.D."/>
            <person name="Fritchman J.L."/>
            <person name="Fuhrmann J.L."/>
            <person name="Geoghagen N.S.M."/>
            <person name="Gnehm C.L."/>
            <person name="McDonald L.A."/>
            <person name="Small K.V."/>
            <person name="Fraser C.M."/>
            <person name="Smith H.O."/>
            <person name="Venter J.C."/>
        </authorList>
    </citation>
    <scope>NUCLEOTIDE SEQUENCE [LARGE SCALE GENOMIC DNA]</scope>
    <source>
        <strain>ATCC 51907 / DSM 11121 / KW20 / Rd</strain>
    </source>
</reference>
<comment type="function">
    <text evidence="3">Murein endopeptidase that cleaves the D-alanyl-meso-2,6-diamino-pimelyl amide bond that connects peptidoglycan strands. Likely plays a role in the removal of murein from the sacculus.</text>
</comment>
<comment type="cofactor">
    <cofactor evidence="1">
        <name>Zn(2+)</name>
        <dbReference type="ChEBI" id="CHEBI:29105"/>
    </cofactor>
    <text evidence="1">Binds 2 Zn(2+) ions per subunit.</text>
</comment>
<comment type="subcellular location">
    <subcellularLocation>
        <location evidence="4">Periplasm</location>
    </subcellularLocation>
</comment>
<comment type="similarity">
    <text evidence="4">Belongs to the peptidase M74 family.</text>
</comment>
<name>MEPA_HAEIN</name>